<dbReference type="EMBL" id="M73525">
    <property type="protein sequence ID" value="AAA43123.1"/>
    <property type="molecule type" value="Genomic_RNA"/>
</dbReference>
<dbReference type="EMBL" id="CY014701">
    <property type="protein sequence ID" value="ABI84576.1"/>
    <property type="molecule type" value="Genomic_RNA"/>
</dbReference>
<dbReference type="SMR" id="P26115"/>
<dbReference type="PRO" id="PR:P26115"/>
<dbReference type="Proteomes" id="UP000000828">
    <property type="component" value="Genome"/>
</dbReference>
<dbReference type="GO" id="GO:0042025">
    <property type="term" value="C:host cell nucleus"/>
    <property type="evidence" value="ECO:0007669"/>
    <property type="project" value="UniProtKB-SubCell"/>
</dbReference>
<dbReference type="GO" id="GO:0044423">
    <property type="term" value="C:virion component"/>
    <property type="evidence" value="ECO:0007669"/>
    <property type="project" value="UniProtKB-UniRule"/>
</dbReference>
<dbReference type="GO" id="GO:0003723">
    <property type="term" value="F:RNA binding"/>
    <property type="evidence" value="ECO:0007669"/>
    <property type="project" value="UniProtKB-UniRule"/>
</dbReference>
<dbReference type="GO" id="GO:0003968">
    <property type="term" value="F:RNA-directed RNA polymerase activity"/>
    <property type="evidence" value="ECO:0007669"/>
    <property type="project" value="UniProtKB-UniRule"/>
</dbReference>
<dbReference type="GO" id="GO:0006370">
    <property type="term" value="P:7-methylguanosine mRNA capping"/>
    <property type="evidence" value="ECO:0007669"/>
    <property type="project" value="UniProtKB-UniRule"/>
</dbReference>
<dbReference type="GO" id="GO:0075526">
    <property type="term" value="P:cap snatching"/>
    <property type="evidence" value="ECO:0007669"/>
    <property type="project" value="UniProtKB-UniRule"/>
</dbReference>
<dbReference type="GO" id="GO:0006351">
    <property type="term" value="P:DNA-templated transcription"/>
    <property type="evidence" value="ECO:0007669"/>
    <property type="project" value="UniProtKB-UniRule"/>
</dbReference>
<dbReference type="GO" id="GO:0039657">
    <property type="term" value="P:symbiont-mediated suppression of host gene expression"/>
    <property type="evidence" value="ECO:0007669"/>
    <property type="project" value="UniProtKB-KW"/>
</dbReference>
<dbReference type="GO" id="GO:0039523">
    <property type="term" value="P:symbiont-mediated suppression of host mRNA transcription via inhibition of RNA polymerase II activity"/>
    <property type="evidence" value="ECO:0007669"/>
    <property type="project" value="UniProtKB-UniRule"/>
</dbReference>
<dbReference type="GO" id="GO:0039694">
    <property type="term" value="P:viral RNA genome replication"/>
    <property type="evidence" value="ECO:0007669"/>
    <property type="project" value="InterPro"/>
</dbReference>
<dbReference type="FunFam" id="3.30.30.90:FF:000001">
    <property type="entry name" value="Polymerase basic protein 2"/>
    <property type="match status" value="1"/>
</dbReference>
<dbReference type="Gene3D" id="3.30.30.90">
    <property type="entry name" value="Polymerase Basic Protein 2, C-terminal domain"/>
    <property type="match status" value="1"/>
</dbReference>
<dbReference type="HAMAP" id="MF_04062">
    <property type="entry name" value="INV_PB2"/>
    <property type="match status" value="1"/>
</dbReference>
<dbReference type="InterPro" id="IPR049110">
    <property type="entry name" value="Flu_PB2_2nd"/>
</dbReference>
<dbReference type="InterPro" id="IPR049114">
    <property type="entry name" value="Flu_PB2_6th"/>
</dbReference>
<dbReference type="InterPro" id="IPR049115">
    <property type="entry name" value="Flu_PB2_C"/>
</dbReference>
<dbReference type="InterPro" id="IPR048298">
    <property type="entry name" value="Flu_PB2_CAP-bd"/>
</dbReference>
<dbReference type="InterPro" id="IPR049111">
    <property type="entry name" value="Flu_PB2_middle"/>
</dbReference>
<dbReference type="InterPro" id="IPR049106">
    <property type="entry name" value="Flu_PB2_N"/>
</dbReference>
<dbReference type="InterPro" id="IPR001591">
    <property type="entry name" value="INV_PB2"/>
</dbReference>
<dbReference type="InterPro" id="IPR049113">
    <property type="entry name" value="PB2_helical"/>
</dbReference>
<dbReference type="InterPro" id="IPR037258">
    <property type="entry name" value="PDB2_C"/>
</dbReference>
<dbReference type="Pfam" id="PF20947">
    <property type="entry name" value="Flu_PB2_1st"/>
    <property type="match status" value="1"/>
</dbReference>
<dbReference type="Pfam" id="PF20948">
    <property type="entry name" value="Flu_PB2_2nd"/>
    <property type="match status" value="1"/>
</dbReference>
<dbReference type="Pfam" id="PF20949">
    <property type="entry name" value="Flu_PB2_3rd"/>
    <property type="match status" value="1"/>
</dbReference>
<dbReference type="Pfam" id="PF20950">
    <property type="entry name" value="Flu_PB2_4th"/>
    <property type="match status" value="1"/>
</dbReference>
<dbReference type="Pfam" id="PF00604">
    <property type="entry name" value="Flu_PB2_5th"/>
    <property type="match status" value="1"/>
</dbReference>
<dbReference type="Pfam" id="PF20951">
    <property type="entry name" value="Flu_PB2_6th"/>
    <property type="match status" value="1"/>
</dbReference>
<dbReference type="Pfam" id="PF20952">
    <property type="entry name" value="Flu_PB2_7th"/>
    <property type="match status" value="1"/>
</dbReference>
<dbReference type="SUPFAM" id="SSF160453">
    <property type="entry name" value="PB2 C-terminal domain-like"/>
    <property type="match status" value="1"/>
</dbReference>
<keyword id="KW-1157">Cap snatching</keyword>
<keyword id="KW-1262">Eukaryotic host gene expression shutoff by virus</keyword>
<keyword id="KW-1191">Eukaryotic host transcription shutoff by virus</keyword>
<keyword id="KW-1190">Host gene expression shutoff by virus</keyword>
<keyword id="KW-1048">Host nucleus</keyword>
<keyword id="KW-0945">Host-virus interaction</keyword>
<keyword id="KW-1104">Inhibition of host RNA polymerase II by virus</keyword>
<keyword id="KW-0506">mRNA capping</keyword>
<keyword id="KW-0507">mRNA processing</keyword>
<keyword id="KW-1195">Viral transcription</keyword>
<keyword id="KW-0946">Virion</keyword>
<proteinExistence type="inferred from homology"/>
<reference key="1">
    <citation type="journal article" date="1990" name="J. Virol.">
        <title>Evolution of influenza A virus PB2 genes: implications for evolution of the ribonucleoprotein complex and origin of human influenza A virus.</title>
        <authorList>
            <person name="Gorman O.T."/>
            <person name="Donis R.O."/>
            <person name="Kawaoka Y."/>
            <person name="Webster R.G."/>
        </authorList>
    </citation>
    <scope>NUCLEOTIDE SEQUENCE [GENOMIC RNA]</scope>
</reference>
<reference key="2">
    <citation type="journal article" date="2006" name="Science">
        <title>Large-scale sequence analysis of avian influenza isolates.</title>
        <authorList>
            <person name="Obenauer J.C."/>
            <person name="Denson J."/>
            <person name="Mehta P.K."/>
            <person name="Su X."/>
            <person name="Mukatira S."/>
            <person name="Finkelstein D.B."/>
            <person name="Xu X."/>
            <person name="Wang J."/>
            <person name="Ma J."/>
            <person name="Fan Y."/>
            <person name="Rakestraw K.M."/>
            <person name="Webster R.G."/>
            <person name="Hoffmann E."/>
            <person name="Krauss S."/>
            <person name="Zheng J."/>
            <person name="Zhang Z."/>
            <person name="Naeve C.W."/>
        </authorList>
    </citation>
    <scope>NUCLEOTIDE SEQUENCE [GENOMIC RNA]</scope>
</reference>
<organismHost>
    <name type="scientific">Aves</name>
    <dbReference type="NCBI Taxonomy" id="8782"/>
</organismHost>
<feature type="chain" id="PRO_0000078819" description="Polymerase basic protein 2">
    <location>
        <begin position="1"/>
        <end position="759"/>
    </location>
</feature>
<feature type="short sequence motif" description="Nuclear localization signal" evidence="1">
    <location>
        <begin position="736"/>
        <end position="739"/>
    </location>
</feature>
<feature type="site" description="Avian adaptation" evidence="1">
    <location>
        <position position="627"/>
    </location>
</feature>
<feature type="sequence conflict" description="In Ref. 2; ABI84576." ref="2">
    <original>A</original>
    <variation>G</variation>
    <location>
        <position position="590"/>
    </location>
</feature>
<sequence length="759" mass="85992">MERIKELRDLMSQSRTREILTKTTVDHMAIIKKYTSGRQEKNPALRMKWMMAMKYPITADKRIMEMIPERNEQGQTLWSKTNDAGSDRVMVSPLAVTWWNRNGPTTSTVHYPKVYKTYFEKVERLKHGTFGPVHFRNQVKIRRRVDINPGHADLSAKEAQDVIMEVVFPNEVGARILTSDSQLTITKEKKEELQDCKIAPLMVAYMLERELVRKTRFLPVAGGTSSVYIEVLHLTQGTCWEQMYTPGGEVRNDDVDQSLIIAARNIVRRATVSADPLASLLEMCHSTQIGGIRMVDILRQNPTEEQAVDICKAAMGLRISSSFSFGGFTFKRTSGSSIKREEEVLTGNLQTLKIRVHEGYEEFTMVGRRATAILRKATRRLIQLIVSGRDEQSIAEAIIVAMVFSQEDCMIKAVRGDLNFVNRANQRLNPMHQLLRHFQKDAKVLFQNWGIEPIDNVMGMIGILPDMTPNAEMSLRGIRVSKMGVDEYSSTERVVVSIDRFLRVRDQRGNVLLSPEEVSETQGTEKLTITYSSSMMWEINGPESVLVNTYQWIIRNWEMIKIQWSQNPTMLYNKMEFEPFQSLVPKAARAQYSGFVRTLFQQMRDVLGTFDTVQIIKLLPFAAAPPEQSRMQFSSLTVNVRGSGMRILVRGNSPVFNYNKATKRLTVLGKDAGSLTEDPDEGTAGVESAVLRGFLILGKEDKRYGPALSINELSNLAKGEKANVLIGQGDVVLVMKRKRDSSILTDSQTATKRIRMAIN</sequence>
<organism>
    <name type="scientific">Influenza A virus (strain A/Gull/Maryland/704/1977 H13N6)</name>
    <dbReference type="NCBI Taxonomy" id="384499"/>
    <lineage>
        <taxon>Viruses</taxon>
        <taxon>Riboviria</taxon>
        <taxon>Orthornavirae</taxon>
        <taxon>Negarnaviricota</taxon>
        <taxon>Polyploviricotina</taxon>
        <taxon>Insthoviricetes</taxon>
        <taxon>Articulavirales</taxon>
        <taxon>Orthomyxoviridae</taxon>
        <taxon>Alphainfluenzavirus</taxon>
        <taxon>Alphainfluenzavirus influenzae</taxon>
        <taxon>Influenza A virus</taxon>
    </lineage>
</organism>
<evidence type="ECO:0000255" key="1">
    <source>
        <dbReference type="HAMAP-Rule" id="MF_04062"/>
    </source>
</evidence>
<protein>
    <recommendedName>
        <fullName evidence="1">Polymerase basic protein 2</fullName>
    </recommendedName>
    <alternativeName>
        <fullName evidence="1">RNA-directed RNA polymerase subunit P3</fullName>
    </alternativeName>
</protein>
<comment type="function">
    <text evidence="1">Plays an essential role in transcription initiation and cap-stealing mechanism, in which cellular capped pre-mRNAs are used to generate primers for viral transcription. Recognizes and binds the 7-methylguanosine-containing cap of the target pre-RNA which is subsequently cleaved after 10-13 nucleotides by the viral protein PA. Plays a role in the initiation of the viral genome replication and modulates the activity of the ribonucleoprotein (RNP) complex.</text>
</comment>
<comment type="subunit">
    <text evidence="1">Influenza RNA polymerase is composed of three subunits: PB1, PB2 and PA. Interacts (via N-terminus) with PB1 (via C-terminus). Interacts with nucleoprotein NP (via N-terminus).</text>
</comment>
<comment type="subcellular location">
    <subcellularLocation>
        <location evidence="1">Virion</location>
    </subcellularLocation>
    <subcellularLocation>
        <location evidence="1">Host nucleus</location>
    </subcellularLocation>
</comment>
<comment type="similarity">
    <text evidence="1">Belongs to the influenza viruses PB2 family.</text>
</comment>
<gene>
    <name evidence="1" type="primary">PB2</name>
</gene>
<name>PB2_I77AF</name>
<accession>P26115</accession>
<accession>Q0A406</accession>